<protein>
    <recommendedName>
        <fullName evidence="7">Protein PATRONUS 1</fullName>
    </recommendedName>
    <alternativeName>
        <fullName evidence="6">Protein COPPER MODIFIED RESISTANCE 1</fullName>
    </alternativeName>
</protein>
<organism evidence="12">
    <name type="scientific">Arabidopsis thaliana</name>
    <name type="common">Mouse-ear cress</name>
    <dbReference type="NCBI Taxonomy" id="3702"/>
    <lineage>
        <taxon>Eukaryota</taxon>
        <taxon>Viridiplantae</taxon>
        <taxon>Streptophyta</taxon>
        <taxon>Embryophyta</taxon>
        <taxon>Tracheophyta</taxon>
        <taxon>Spermatophyta</taxon>
        <taxon>Magnoliopsida</taxon>
        <taxon>eudicotyledons</taxon>
        <taxon>Gunneridae</taxon>
        <taxon>Pentapetalae</taxon>
        <taxon>rosids</taxon>
        <taxon>malvids</taxon>
        <taxon>Brassicales</taxon>
        <taxon>Brassicaceae</taxon>
        <taxon>Camelineae</taxon>
        <taxon>Arabidopsis</taxon>
    </lineage>
</organism>
<dbReference type="EMBL" id="AP000600">
    <property type="protein sequence ID" value="BAB02986.1"/>
    <property type="molecule type" value="Genomic_DNA"/>
</dbReference>
<dbReference type="EMBL" id="CP002686">
    <property type="protein sequence ID" value="AEE75484.1"/>
    <property type="molecule type" value="Genomic_DNA"/>
</dbReference>
<dbReference type="EMBL" id="CP002686">
    <property type="protein sequence ID" value="ANM65516.1"/>
    <property type="molecule type" value="Genomic_DNA"/>
</dbReference>
<dbReference type="EMBL" id="BT003111">
    <property type="protein sequence ID" value="AAO24543.1"/>
    <property type="molecule type" value="mRNA"/>
</dbReference>
<dbReference type="EMBL" id="AK228197">
    <property type="protein sequence ID" value="BAF00151.1"/>
    <property type="molecule type" value="mRNA"/>
</dbReference>
<dbReference type="EMBL" id="AY084592">
    <property type="protein sequence ID" value="AAM61157.1"/>
    <property type="molecule type" value="mRNA"/>
</dbReference>
<dbReference type="RefSeq" id="NP_001327476.1">
    <property type="nucleotide sequence ID" value="NM_001338112.1"/>
</dbReference>
<dbReference type="RefSeq" id="NP_566480.1">
    <property type="nucleotide sequence ID" value="NM_112275.3"/>
</dbReference>
<dbReference type="FunCoup" id="Q9LJG6">
    <property type="interactions" value="77"/>
</dbReference>
<dbReference type="STRING" id="3702.Q9LJG6"/>
<dbReference type="PaxDb" id="3702-AT3G14190.1"/>
<dbReference type="EnsemblPlants" id="AT3G14190.1">
    <property type="protein sequence ID" value="AT3G14190.1"/>
    <property type="gene ID" value="AT3G14190"/>
</dbReference>
<dbReference type="EnsemblPlants" id="AT3G14190.2">
    <property type="protein sequence ID" value="AT3G14190.2"/>
    <property type="gene ID" value="AT3G14190"/>
</dbReference>
<dbReference type="GeneID" id="820636"/>
<dbReference type="Gramene" id="AT3G14190.1">
    <property type="protein sequence ID" value="AT3G14190.1"/>
    <property type="gene ID" value="AT3G14190"/>
</dbReference>
<dbReference type="Gramene" id="AT3G14190.2">
    <property type="protein sequence ID" value="AT3G14190.2"/>
    <property type="gene ID" value="AT3G14190"/>
</dbReference>
<dbReference type="KEGG" id="ath:AT3G14190"/>
<dbReference type="Araport" id="AT3G14190"/>
<dbReference type="TAIR" id="AT3G14190">
    <property type="gene designation" value="CMR1"/>
</dbReference>
<dbReference type="eggNOG" id="ENOG502R1GX">
    <property type="taxonomic scope" value="Eukaryota"/>
</dbReference>
<dbReference type="HOGENOM" id="CLU_1423353_0_0_1"/>
<dbReference type="InParanoid" id="Q9LJG6"/>
<dbReference type="OMA" id="KYDTEMM"/>
<dbReference type="PhylomeDB" id="Q9LJG6"/>
<dbReference type="PRO" id="PR:Q9LJG6"/>
<dbReference type="Proteomes" id="UP000006548">
    <property type="component" value="Chromosome 3"/>
</dbReference>
<dbReference type="ExpressionAtlas" id="Q9LJG6">
    <property type="expression patterns" value="baseline and differential"/>
</dbReference>
<dbReference type="GO" id="GO:0005737">
    <property type="term" value="C:cytoplasm"/>
    <property type="evidence" value="ECO:0007669"/>
    <property type="project" value="UniProtKB-SubCell"/>
</dbReference>
<dbReference type="GO" id="GO:0005730">
    <property type="term" value="C:nucleolus"/>
    <property type="evidence" value="ECO:0000314"/>
    <property type="project" value="TAIR"/>
</dbReference>
<dbReference type="GO" id="GO:0005634">
    <property type="term" value="C:nucleus"/>
    <property type="evidence" value="ECO:0000314"/>
    <property type="project" value="TAIR"/>
</dbReference>
<dbReference type="GO" id="GO:0051301">
    <property type="term" value="P:cell division"/>
    <property type="evidence" value="ECO:0007669"/>
    <property type="project" value="UniProtKB-KW"/>
</dbReference>
<dbReference type="GO" id="GO:0007059">
    <property type="term" value="P:chromosome segregation"/>
    <property type="evidence" value="ECO:0007669"/>
    <property type="project" value="UniProtKB-KW"/>
</dbReference>
<dbReference type="GO" id="GO:0051321">
    <property type="term" value="P:meiotic cell cycle"/>
    <property type="evidence" value="ECO:0007669"/>
    <property type="project" value="UniProtKB-KW"/>
</dbReference>
<dbReference type="GO" id="GO:0034096">
    <property type="term" value="P:positive regulation of maintenance of meiotic sister chromatid cohesion"/>
    <property type="evidence" value="ECO:0000315"/>
    <property type="project" value="TAIR"/>
</dbReference>
<dbReference type="GO" id="GO:2000711">
    <property type="term" value="P:positive regulation of maintenance of meiotic sister chromatid cohesion, centromeric"/>
    <property type="evidence" value="ECO:0000315"/>
    <property type="project" value="TAIR"/>
</dbReference>
<dbReference type="GO" id="GO:0007346">
    <property type="term" value="P:regulation of mitotic cell cycle"/>
    <property type="evidence" value="ECO:0000315"/>
    <property type="project" value="TAIR"/>
</dbReference>
<dbReference type="InterPro" id="IPR039326">
    <property type="entry name" value="Patronus"/>
</dbReference>
<dbReference type="PANTHER" id="PTHR35125">
    <property type="entry name" value="NEURON NAVIGATOR 1-LIKE-RELATED"/>
    <property type="match status" value="1"/>
</dbReference>
<dbReference type="PANTHER" id="PTHR35125:SF4">
    <property type="entry name" value="PROTEIN PATRONUS 1"/>
    <property type="match status" value="1"/>
</dbReference>
<accession>Q9LJG6</accession>
<accession>Q84WK8</accession>
<accession>Q8LFX6</accession>
<keyword id="KW-0131">Cell cycle</keyword>
<keyword id="KW-0132">Cell division</keyword>
<keyword id="KW-0159">Chromosome partition</keyword>
<keyword id="KW-0963">Cytoplasm</keyword>
<keyword id="KW-0469">Meiosis</keyword>
<keyword id="KW-0498">Mitosis</keyword>
<keyword id="KW-0539">Nucleus</keyword>
<keyword id="KW-1185">Reference proteome</keyword>
<reference key="1">
    <citation type="journal article" date="2000" name="DNA Res.">
        <title>Structural analysis of Arabidopsis thaliana chromosome 3. II. Sequence features of the 4,251,695 bp regions covered by 90 P1, TAC and BAC clones.</title>
        <authorList>
            <person name="Kaneko T."/>
            <person name="Katoh T."/>
            <person name="Sato S."/>
            <person name="Nakamura Y."/>
            <person name="Asamizu E."/>
            <person name="Tabata S."/>
        </authorList>
    </citation>
    <scope>NUCLEOTIDE SEQUENCE [LARGE SCALE GENOMIC DNA]</scope>
    <source>
        <strain>cv. Columbia</strain>
    </source>
</reference>
<reference key="2">
    <citation type="journal article" date="2017" name="Plant J.">
        <title>Araport11: a complete reannotation of the Arabidopsis thaliana reference genome.</title>
        <authorList>
            <person name="Cheng C.Y."/>
            <person name="Krishnakumar V."/>
            <person name="Chan A.P."/>
            <person name="Thibaud-Nissen F."/>
            <person name="Schobel S."/>
            <person name="Town C.D."/>
        </authorList>
    </citation>
    <scope>GENOME REANNOTATION</scope>
    <source>
        <strain>cv. Columbia</strain>
    </source>
</reference>
<reference key="3">
    <citation type="journal article" date="2003" name="Science">
        <title>Empirical analysis of transcriptional activity in the Arabidopsis genome.</title>
        <authorList>
            <person name="Yamada K."/>
            <person name="Lim J."/>
            <person name="Dale J.M."/>
            <person name="Chen H."/>
            <person name="Shinn P."/>
            <person name="Palm C.J."/>
            <person name="Southwick A.M."/>
            <person name="Wu H.C."/>
            <person name="Kim C.J."/>
            <person name="Nguyen M."/>
            <person name="Pham P.K."/>
            <person name="Cheuk R.F."/>
            <person name="Karlin-Newmann G."/>
            <person name="Liu S.X."/>
            <person name="Lam B."/>
            <person name="Sakano H."/>
            <person name="Wu T."/>
            <person name="Yu G."/>
            <person name="Miranda M."/>
            <person name="Quach H.L."/>
            <person name="Tripp M."/>
            <person name="Chang C.H."/>
            <person name="Lee J.M."/>
            <person name="Toriumi M.J."/>
            <person name="Chan M.M."/>
            <person name="Tang C.C."/>
            <person name="Onodera C.S."/>
            <person name="Deng J.M."/>
            <person name="Akiyama K."/>
            <person name="Ansari Y."/>
            <person name="Arakawa T."/>
            <person name="Banh J."/>
            <person name="Banno F."/>
            <person name="Bowser L."/>
            <person name="Brooks S.Y."/>
            <person name="Carninci P."/>
            <person name="Chao Q."/>
            <person name="Choy N."/>
            <person name="Enju A."/>
            <person name="Goldsmith A.D."/>
            <person name="Gurjal M."/>
            <person name="Hansen N.F."/>
            <person name="Hayashizaki Y."/>
            <person name="Johnson-Hopson C."/>
            <person name="Hsuan V.W."/>
            <person name="Iida K."/>
            <person name="Karnes M."/>
            <person name="Khan S."/>
            <person name="Koesema E."/>
            <person name="Ishida J."/>
            <person name="Jiang P.X."/>
            <person name="Jones T."/>
            <person name="Kawai J."/>
            <person name="Kamiya A."/>
            <person name="Meyers C."/>
            <person name="Nakajima M."/>
            <person name="Narusaka M."/>
            <person name="Seki M."/>
            <person name="Sakurai T."/>
            <person name="Satou M."/>
            <person name="Tamse R."/>
            <person name="Vaysberg M."/>
            <person name="Wallender E.K."/>
            <person name="Wong C."/>
            <person name="Yamamura Y."/>
            <person name="Yuan S."/>
            <person name="Shinozaki K."/>
            <person name="Davis R.W."/>
            <person name="Theologis A."/>
            <person name="Ecker J.R."/>
        </authorList>
    </citation>
    <scope>NUCLEOTIDE SEQUENCE [LARGE SCALE MRNA]</scope>
    <source>
        <strain>cv. Columbia</strain>
    </source>
</reference>
<reference key="4">
    <citation type="submission" date="2006-07" db="EMBL/GenBank/DDBJ databases">
        <title>Large-scale analysis of RIKEN Arabidopsis full-length (RAFL) cDNAs.</title>
        <authorList>
            <person name="Totoki Y."/>
            <person name="Seki M."/>
            <person name="Ishida J."/>
            <person name="Nakajima M."/>
            <person name="Enju A."/>
            <person name="Kamiya A."/>
            <person name="Narusaka M."/>
            <person name="Shin-i T."/>
            <person name="Nakagawa M."/>
            <person name="Sakamoto N."/>
            <person name="Oishi K."/>
            <person name="Kohara Y."/>
            <person name="Kobayashi M."/>
            <person name="Toyoda A."/>
            <person name="Sakaki Y."/>
            <person name="Sakurai T."/>
            <person name="Iida K."/>
            <person name="Akiyama K."/>
            <person name="Satou M."/>
            <person name="Toyoda T."/>
            <person name="Konagaya A."/>
            <person name="Carninci P."/>
            <person name="Kawai J."/>
            <person name="Hayashizaki Y."/>
            <person name="Shinozaki K."/>
        </authorList>
    </citation>
    <scope>NUCLEOTIDE SEQUENCE [LARGE SCALE MRNA]</scope>
    <source>
        <strain>cv. Columbia</strain>
    </source>
</reference>
<reference key="5">
    <citation type="submission" date="2002-03" db="EMBL/GenBank/DDBJ databases">
        <title>Full-length cDNA from Arabidopsis thaliana.</title>
        <authorList>
            <person name="Brover V.V."/>
            <person name="Troukhan M.E."/>
            <person name="Alexandrov N.A."/>
            <person name="Lu Y.-P."/>
            <person name="Flavell R.B."/>
            <person name="Feldmann K.A."/>
        </authorList>
    </citation>
    <scope>NUCLEOTIDE SEQUENCE [LARGE SCALE MRNA]</scope>
</reference>
<reference key="6">
    <citation type="journal article" date="2013" name="Curr. Biol.">
        <title>Centromeric cohesion is protected twice at meiosis, by SHUGOSHINs at anaphase I and by PATRONUS at interkinesis.</title>
        <authorList>
            <person name="Cromer L."/>
            <person name="Jolivet S."/>
            <person name="Horlow C."/>
            <person name="Chelysheva L."/>
            <person name="Heyman J."/>
            <person name="De Jaeger G."/>
            <person name="Koncz C."/>
            <person name="De Veylder L."/>
            <person name="Mercier R."/>
        </authorList>
    </citation>
    <scope>FUNCTION</scope>
    <scope>INDUCTION</scope>
    <scope>TISSUE SPECIFICITY</scope>
    <scope>DISRUPTION PHENOTYPE</scope>
    <scope>INTERACTION WITH CDC27B AND CDC20-1</scope>
    <scope>MUTAGENESIS OF 14-ASP--ASN-16 AND 46-ARG--LEU-49</scope>
    <scope>DOMAIN</scope>
</reference>
<reference key="7">
    <citation type="journal article" date="2014" name="New Phytol.">
        <title>Towards the discovery of novel genetic component involved in stress resistance in Arabidopsis thaliana.</title>
        <authorList>
            <person name="Juraniec M."/>
            <person name="Lequeux H."/>
            <person name="Hermans C."/>
            <person name="Willems G."/>
            <person name="Nordborg M."/>
            <person name="Schneeberger K."/>
            <person name="Salis P."/>
            <person name="Vromant M."/>
            <person name="Lutts S."/>
            <person name="Verbruggen N."/>
        </authorList>
    </citation>
    <scope>FUNCTION</scope>
    <scope>DISRUPTION PHENOTYPE</scope>
    <scope>SUBCELLULAR LOCATION</scope>
</reference>
<reference key="8">
    <citation type="journal article" date="2014" name="Plant J.">
        <title>SHUGOSHINs and PATRONUS protect meiotic centromere cohesion in Arabidopsis thaliana.</title>
        <authorList>
            <person name="Zamariola L."/>
            <person name="De Storme N."/>
            <person name="Vannerum K."/>
            <person name="Vandepoele K."/>
            <person name="Armstrong S.J."/>
            <person name="Franklin F.C."/>
            <person name="Geelen D."/>
        </authorList>
    </citation>
    <scope>FUNCTION</scope>
    <scope>DISRUPTION PHENOTYPE</scope>
</reference>
<reference key="9">
    <citation type="journal article" date="2015" name="BMC Plant Biol.">
        <title>PATRONUS1 is expressed in meiotic prophase I to regulate centromeric cohesion in Arabidopsis and shows synthetic lethality with OSD1.</title>
        <authorList>
            <person name="Singh D.K."/>
            <person name="Spillane C."/>
            <person name="Siddiqi I."/>
        </authorList>
    </citation>
    <scope>FUNCTION</scope>
    <scope>DISRUPTION PHENOTYPE</scope>
    <scope>SUBCELLULAR LOCATION</scope>
    <scope>TISSUE SPECIFICITY</scope>
    <scope>INDUCTION</scope>
</reference>
<reference key="10">
    <citation type="journal article" date="2016" name="New Phytol.">
        <title>Arabidopsis COPPER MODIFIED RESISTANCE1/PATRONUS1 is essential for growth adaptation to stress and required for mitotic onset control.</title>
        <authorList>
            <person name="Juraniec M."/>
            <person name="Heyman J."/>
            <person name="Schubert V."/>
            <person name="Salis P."/>
            <person name="De Veylder L."/>
            <person name="Verbruggen N."/>
        </authorList>
    </citation>
    <scope>FUNCTION</scope>
    <scope>TISSUE SPECIFICITY</scope>
    <scope>INDUCTION</scope>
    <scope>DISRUPTION PHENOTYPE</scope>
</reference>
<sequence>MANMNALQQMIFPDENAPIHRKKSVTAASVKSKGTVLGQKKPGGARKALNDITNKSGIHAKAAASSKNKQIASAAVKEIDIAGERFLHDHSKCIKEQQNLWDDHYSADLMLLHHGSSIKEKHLNWDIEKMDAKDDLTYEEPEEMASPKFSDWLKNSTPWRSPIRHGSMMPSTPLAWRFDSCEFTLKEDSDDLF</sequence>
<proteinExistence type="evidence at protein level"/>
<name>PANS1_ARATH</name>
<comment type="function">
    <text evidence="1 2 3 4 5">Required for the maintenance of centromeric cohesion during interkinesis, until meiosis II (PubMed:24206843, PubMed:26272661). Required for regular configuration and segregation of sister chromatids in meiosis II (PubMed:24506176). Also required for centromere cohesion during meiosis I (PubMed:26272661). Involved in spindle organization at the end of telophase I and in meiosis II (PubMed:24506176). Required to prevent precocious release of pericentromeric cohesins during meiosis, but not for cohesion establishment and monopolar orientation of kinetochores at meiosis I (PubMed:24206843). Involved also in somatic development (PubMed:24206843). Regulates mitotic cell division and ploidy stability in somatic cell types (PubMed:24506176). May be involved in the organization of microtubules dynamics (PubMed:24506176). Involved in abiotic stresses and mono- or divalent ions tolerance and may play a role in maintaining meristematic activity under saline conditions (PubMed:24134393). PANS1 and GIG1 are part of a network linking centromere cohesion and cell cycle progression through control of APC/C activity (PubMed:26272661). Regulates the number of dividing cells in root meristem and is necessary for the anaphase onset control through an APC/C-mediated pathway (PubMed:26261921). Involved in maintaining correct chromosome arm cohesion under stress conditions (PubMed:26261921).</text>
</comment>
<comment type="subunit">
    <text evidence="2">Interacts directly with the anaphase promoting complex/cyclosome (APC/C) through the CDC27B and CDC20-1 subunits.</text>
</comment>
<comment type="subcellular location">
    <subcellularLocation>
        <location evidence="1 5">Nucleus</location>
    </subcellularLocation>
    <subcellularLocation>
        <location evidence="1">Cytoplasm</location>
    </subcellularLocation>
    <text evidence="5">Excluded from the nucleolus.</text>
</comment>
<comment type="tissue specificity">
    <text evidence="2 4 5">Expressed in somatic and reproductive tissues (PubMed:24206843). Expressed in inflorescence, young buds, roots and basal portion of young leaves (PubMed:26272661). Expressed in proliferating cells such as apical meristems of roots and shoots, expanding cotyledons and leaves, root vascular tissues, and in stomatal precursor cells (PubMed:26261921).</text>
</comment>
<comment type="induction">
    <text evidence="4 5 9">Cell cycle regulated with a peak at late M/early G1 phase mitosis (PubMed:24206843). Peak of expression during metaphase (PubMed:26261921). Strongly expressed up to mid-prophase I and decreases during late prophase (PubMed:26272661). Not induced by stress (PubMed:26261921).</text>
</comment>
<comment type="domain">
    <text evidence="2">The DEN-box is not essential for the meiotic function.</text>
</comment>
<comment type="disruption phenotype">
    <text evidence="1 2 3 4 5">Reduced fertility when homozygous (PubMed:24206843, PubMed:24506176). High level of gametophytic aneuploidy (PubMed:24506176, PubMed:26272661). Occurrence of split sister centromeres at metaphase I (PubMed:26272661). Pans1 and pans2 double mutants are lethal when homozygous (PubMed:24206843). Increased mono- or divalent ions sensitivity resulting in primary root growth inhibition and increased lateral root density (PubMed:24134393). Hypersensitivity to microtubule-depolymerizing drugs and higher frequency of anaphase bridges under stress conditions (PubMed:26261921).</text>
</comment>
<comment type="miscellaneous">
    <text evidence="9">Patronus is Latin for protector.</text>
</comment>
<gene>
    <name evidence="7" type="primary">PANS1</name>
    <name evidence="6" type="synonym">CMR1</name>
    <name evidence="10 11" type="ordered locus">At3g14190</name>
</gene>
<evidence type="ECO:0000269" key="1">
    <source>
    </source>
</evidence>
<evidence type="ECO:0000269" key="2">
    <source>
    </source>
</evidence>
<evidence type="ECO:0000269" key="3">
    <source>
    </source>
</evidence>
<evidence type="ECO:0000269" key="4">
    <source>
    </source>
</evidence>
<evidence type="ECO:0000269" key="5">
    <source>
    </source>
</evidence>
<evidence type="ECO:0000303" key="6">
    <source>
    </source>
</evidence>
<evidence type="ECO:0000303" key="7">
    <source ref="5"/>
</evidence>
<evidence type="ECO:0000305" key="8"/>
<evidence type="ECO:0000305" key="9">
    <source>
    </source>
</evidence>
<evidence type="ECO:0000312" key="10">
    <source>
        <dbReference type="Araport" id="AT3G14190"/>
    </source>
</evidence>
<evidence type="ECO:0000312" key="11">
    <source>
        <dbReference type="EMBL" id="AEE75484.1"/>
    </source>
</evidence>
<evidence type="ECO:0000312" key="12">
    <source>
        <dbReference type="EMBL" id="BAB02986.1"/>
    </source>
</evidence>
<feature type="chain" id="PRO_0000438544" description="Protein PATRONUS 1">
    <location>
        <begin position="1"/>
        <end position="193"/>
    </location>
</feature>
<feature type="short sequence motif" description="DEN-box" evidence="8">
    <location>
        <begin position="14"/>
        <end position="16"/>
    </location>
</feature>
<feature type="short sequence motif" description="D-box" evidence="8">
    <location>
        <begin position="46"/>
        <end position="49"/>
    </location>
</feature>
<feature type="mutagenesis site" description="No effect on the interaction with CDC27B, but strongly decreased interaction with CDC20-1. Loss of interaction with CDC20-1 and lethality; when associated with 46-LKAV-49." evidence="2">
    <original>DEN</original>
    <variation>AAA</variation>
    <location>
        <begin position="14"/>
        <end position="16"/>
    </location>
</feature>
<feature type="mutagenesis site" description="No effect on the interaction with CDC27B, but strongly decreased interaction with CDC20-1. Loss of interaction with CDC20-1 and lethality; when associated with 14-AAA-16." evidence="2">
    <original>RKAL</original>
    <variation>LKAV</variation>
    <location>
        <begin position="46"/>
        <end position="49"/>
    </location>
</feature>
<feature type="sequence conflict" description="In Ref. 5; AAM61157." evidence="8" ref="5">
    <original>G</original>
    <variation>V</variation>
    <location>
        <position position="43"/>
    </location>
</feature>
<feature type="sequence conflict" description="In Ref. 3; AAO24543 and 4; BAF00151." evidence="8" ref="3 4">
    <original>K</original>
    <variation>E</variation>
    <location>
        <position position="77"/>
    </location>
</feature>
<feature type="sequence conflict" description="In Ref. 5; AAM61157." evidence="8" ref="5">
    <original>K</original>
    <variation>KD</variation>
    <location>
        <position position="77"/>
    </location>
</feature>